<sequence length="397" mass="41650">MSESVHTNTSLWSKGMKAVIVAQFLSAFGDNALLFATLALLKAQFYPEWSQPILQMVFVGAYILFAPFVGQVADSFAKGRVMMFANGLKLLGAASICFGINPFLGYTLVGVGAAAYSPAKYGILGELTTGSKLVKANGLMEASTIAAILLGSVAGGVLADWHVLVALAACALAYGGAVVANIYIPKLAAARPGQSWNLINMTRSFLNACTSLWRNGETRFSLVGTSLFWGAGVTLRFLLVLWVPVALGITDNATPTYLNAMVAIGIVVGAGAAAKLVTLETVSRCMPAGILIGVVVLIFSLQHELLPAYALLMLIGVLGGFFVVPLNALLQERGKKSVGAGNAIAVQNLGENSAMLLMLGIYSLAVMVGIPVVPIGIGFGALFALAITALWIWQRRY</sequence>
<name>LPLT_ECO27</name>
<dbReference type="EMBL" id="FM180568">
    <property type="protein sequence ID" value="CAS10653.1"/>
    <property type="molecule type" value="Genomic_DNA"/>
</dbReference>
<dbReference type="RefSeq" id="WP_000004611.1">
    <property type="nucleotide sequence ID" value="NC_011601.1"/>
</dbReference>
<dbReference type="SMR" id="B7UHQ3"/>
<dbReference type="KEGG" id="ecg:E2348C_3105"/>
<dbReference type="HOGENOM" id="CLU_047399_0_0_6"/>
<dbReference type="Proteomes" id="UP000008205">
    <property type="component" value="Chromosome"/>
</dbReference>
<dbReference type="GO" id="GO:0005886">
    <property type="term" value="C:plasma membrane"/>
    <property type="evidence" value="ECO:0007669"/>
    <property type="project" value="UniProtKB-SubCell"/>
</dbReference>
<dbReference type="GO" id="GO:0051978">
    <property type="term" value="F:lysophospholipid:sodium symporter activity"/>
    <property type="evidence" value="ECO:0007669"/>
    <property type="project" value="InterPro"/>
</dbReference>
<dbReference type="CDD" id="cd06173">
    <property type="entry name" value="MFS_MefA_like"/>
    <property type="match status" value="1"/>
</dbReference>
<dbReference type="FunFam" id="1.20.1250.20:FF:000091">
    <property type="entry name" value="Lysophospholipid transporter LplT"/>
    <property type="match status" value="1"/>
</dbReference>
<dbReference type="Gene3D" id="1.20.1250.20">
    <property type="entry name" value="MFS general substrate transporter like domains"/>
    <property type="match status" value="1"/>
</dbReference>
<dbReference type="HAMAP" id="MF_01585">
    <property type="entry name" value="MFS_LplT"/>
    <property type="match status" value="1"/>
</dbReference>
<dbReference type="InterPro" id="IPR023727">
    <property type="entry name" value="LysoPLipid__transptr_LplT"/>
</dbReference>
<dbReference type="InterPro" id="IPR011701">
    <property type="entry name" value="MFS"/>
</dbReference>
<dbReference type="InterPro" id="IPR036259">
    <property type="entry name" value="MFS_trans_sf"/>
</dbReference>
<dbReference type="NCBIfam" id="NF008397">
    <property type="entry name" value="PRK11195.1"/>
    <property type="match status" value="1"/>
</dbReference>
<dbReference type="PANTHER" id="PTHR43266">
    <property type="entry name" value="MACROLIDE-EFFLUX PROTEIN"/>
    <property type="match status" value="1"/>
</dbReference>
<dbReference type="PANTHER" id="PTHR43266:SF2">
    <property type="entry name" value="MAJOR FACILITATOR SUPERFAMILY (MFS) PROFILE DOMAIN-CONTAINING PROTEIN"/>
    <property type="match status" value="1"/>
</dbReference>
<dbReference type="Pfam" id="PF07690">
    <property type="entry name" value="MFS_1"/>
    <property type="match status" value="1"/>
</dbReference>
<dbReference type="SUPFAM" id="SSF103473">
    <property type="entry name" value="MFS general substrate transporter"/>
    <property type="match status" value="1"/>
</dbReference>
<accession>B7UHQ3</accession>
<organism>
    <name type="scientific">Escherichia coli O127:H6 (strain E2348/69 / EPEC)</name>
    <dbReference type="NCBI Taxonomy" id="574521"/>
    <lineage>
        <taxon>Bacteria</taxon>
        <taxon>Pseudomonadati</taxon>
        <taxon>Pseudomonadota</taxon>
        <taxon>Gammaproteobacteria</taxon>
        <taxon>Enterobacterales</taxon>
        <taxon>Enterobacteriaceae</taxon>
        <taxon>Escherichia</taxon>
    </lineage>
</organism>
<gene>
    <name evidence="1" type="primary">lplT</name>
    <name type="ordered locus">E2348C_3105</name>
</gene>
<reference key="1">
    <citation type="journal article" date="2009" name="J. Bacteriol.">
        <title>Complete genome sequence and comparative genome analysis of enteropathogenic Escherichia coli O127:H6 strain E2348/69.</title>
        <authorList>
            <person name="Iguchi A."/>
            <person name="Thomson N.R."/>
            <person name="Ogura Y."/>
            <person name="Saunders D."/>
            <person name="Ooka T."/>
            <person name="Henderson I.R."/>
            <person name="Harris D."/>
            <person name="Asadulghani M."/>
            <person name="Kurokawa K."/>
            <person name="Dean P."/>
            <person name="Kenny B."/>
            <person name="Quail M.A."/>
            <person name="Thurston S."/>
            <person name="Dougan G."/>
            <person name="Hayashi T."/>
            <person name="Parkhill J."/>
            <person name="Frankel G."/>
        </authorList>
    </citation>
    <scope>NUCLEOTIDE SEQUENCE [LARGE SCALE GENOMIC DNA]</scope>
    <source>
        <strain>E2348/69 / EPEC</strain>
    </source>
</reference>
<comment type="function">
    <text evidence="1">Catalyzes the facilitated diffusion of 2-acyl-glycero-3-phosphoethanolamine (2-acyl-GPE) into the cell.</text>
</comment>
<comment type="subcellular location">
    <subcellularLocation>
        <location evidence="1">Cell inner membrane</location>
        <topology evidence="1">Multi-pass membrane protein</topology>
    </subcellularLocation>
</comment>
<comment type="similarity">
    <text evidence="1">Belongs to the major facilitator superfamily. LplT (TC 2.A.1.42) family.</text>
</comment>
<evidence type="ECO:0000255" key="1">
    <source>
        <dbReference type="HAMAP-Rule" id="MF_01585"/>
    </source>
</evidence>
<keyword id="KW-0997">Cell inner membrane</keyword>
<keyword id="KW-1003">Cell membrane</keyword>
<keyword id="KW-0445">Lipid transport</keyword>
<keyword id="KW-0472">Membrane</keyword>
<keyword id="KW-1185">Reference proteome</keyword>
<keyword id="KW-0812">Transmembrane</keyword>
<keyword id="KW-1133">Transmembrane helix</keyword>
<keyword id="KW-0813">Transport</keyword>
<protein>
    <recommendedName>
        <fullName evidence="1">Lysophospholipid transporter LplT</fullName>
    </recommendedName>
</protein>
<feature type="chain" id="PRO_1000185670" description="Lysophospholipid transporter LplT">
    <location>
        <begin position="1"/>
        <end position="397"/>
    </location>
</feature>
<feature type="topological domain" description="Periplasmic" evidence="1">
    <location>
        <begin position="1"/>
        <end position="17"/>
    </location>
</feature>
<feature type="transmembrane region" description="Helical" evidence="1">
    <location>
        <begin position="18"/>
        <end position="38"/>
    </location>
</feature>
<feature type="topological domain" description="Cytoplasmic" evidence="1">
    <location>
        <begin position="39"/>
        <end position="52"/>
    </location>
</feature>
<feature type="transmembrane region" description="Helical" evidence="1">
    <location>
        <begin position="53"/>
        <end position="73"/>
    </location>
</feature>
<feature type="topological domain" description="Periplasmic" evidence="1">
    <location>
        <begin position="74"/>
        <end position="90"/>
    </location>
</feature>
<feature type="transmembrane region" description="Helical" evidence="1">
    <location>
        <begin position="91"/>
        <end position="111"/>
    </location>
</feature>
<feature type="topological domain" description="Cytoplasmic" evidence="1">
    <location>
        <begin position="112"/>
        <end position="144"/>
    </location>
</feature>
<feature type="transmembrane region" description="Helical" evidence="1">
    <location>
        <begin position="145"/>
        <end position="165"/>
    </location>
</feature>
<feature type="topological domain" description="Periplasmic" evidence="1">
    <location>
        <position position="166"/>
    </location>
</feature>
<feature type="transmembrane region" description="Helical" evidence="1">
    <location>
        <begin position="167"/>
        <end position="187"/>
    </location>
</feature>
<feature type="topological domain" description="Cytoplasmic" evidence="1">
    <location>
        <begin position="188"/>
        <end position="226"/>
    </location>
</feature>
<feature type="transmembrane region" description="Helical" evidence="1">
    <location>
        <begin position="227"/>
        <end position="247"/>
    </location>
</feature>
<feature type="topological domain" description="Periplasmic" evidence="1">
    <location>
        <begin position="248"/>
        <end position="256"/>
    </location>
</feature>
<feature type="transmembrane region" description="Helical" evidence="1">
    <location>
        <begin position="257"/>
        <end position="277"/>
    </location>
</feature>
<feature type="topological domain" description="Cytoplasmic" evidence="1">
    <location>
        <begin position="278"/>
        <end position="280"/>
    </location>
</feature>
<feature type="transmembrane region" description="Helical" evidence="1">
    <location>
        <begin position="281"/>
        <end position="301"/>
    </location>
</feature>
<feature type="topological domain" description="Periplasmic" evidence="1">
    <location>
        <begin position="302"/>
        <end position="304"/>
    </location>
</feature>
<feature type="transmembrane region" description="Helical" evidence="1">
    <location>
        <begin position="305"/>
        <end position="325"/>
    </location>
</feature>
<feature type="topological domain" description="Cytoplasmic" evidence="1">
    <location>
        <begin position="326"/>
        <end position="343"/>
    </location>
</feature>
<feature type="transmembrane region" description="Helical" evidence="1">
    <location>
        <begin position="344"/>
        <end position="364"/>
    </location>
</feature>
<feature type="topological domain" description="Periplasmic" evidence="1">
    <location>
        <begin position="365"/>
        <end position="366"/>
    </location>
</feature>
<feature type="transmembrane region" description="Helical" evidence="1">
    <location>
        <begin position="367"/>
        <end position="387"/>
    </location>
</feature>
<feature type="topological domain" description="Cytoplasmic" evidence="1">
    <location>
        <begin position="388"/>
        <end position="397"/>
    </location>
</feature>
<proteinExistence type="inferred from homology"/>